<feature type="chain" id="PRO_0000308234" description="Squamosa promoter-binding-like protein 9">
    <location>
        <begin position="1"/>
        <end position="842"/>
    </location>
</feature>
<feature type="zinc finger region" description="SBP-type; atypical" evidence="3">
    <location>
        <begin position="168"/>
        <end position="245"/>
    </location>
</feature>
<feature type="region of interest" description="Disordered" evidence="4">
    <location>
        <begin position="1"/>
        <end position="22"/>
    </location>
</feature>
<feature type="region of interest" description="Disordered" evidence="4">
    <location>
        <begin position="59"/>
        <end position="97"/>
    </location>
</feature>
<feature type="region of interest" description="Disordered" evidence="4">
    <location>
        <begin position="140"/>
        <end position="168"/>
    </location>
</feature>
<feature type="region of interest" description="Disordered" evidence="4">
    <location>
        <begin position="236"/>
        <end position="256"/>
    </location>
</feature>
<feature type="short sequence motif" description="Bipartite nuclear localization signal" evidence="2">
    <location>
        <begin position="228"/>
        <end position="244"/>
    </location>
</feature>
<feature type="compositionally biased region" description="Gly residues" evidence="4">
    <location>
        <begin position="1"/>
        <end position="18"/>
    </location>
</feature>
<feature type="compositionally biased region" description="Low complexity" evidence="4">
    <location>
        <begin position="69"/>
        <end position="85"/>
    </location>
</feature>
<feature type="compositionally biased region" description="Gly residues" evidence="4">
    <location>
        <begin position="146"/>
        <end position="162"/>
    </location>
</feature>
<feature type="compositionally biased region" description="Basic residues" evidence="4">
    <location>
        <begin position="236"/>
        <end position="246"/>
    </location>
</feature>
<feature type="binding site" evidence="3">
    <location>
        <position position="171"/>
    </location>
    <ligand>
        <name>Zn(2+)</name>
        <dbReference type="ChEBI" id="CHEBI:29105"/>
        <label>1</label>
    </ligand>
</feature>
<feature type="binding site" evidence="3">
    <location>
        <position position="176"/>
    </location>
    <ligand>
        <name>Zn(2+)</name>
        <dbReference type="ChEBI" id="CHEBI:29105"/>
        <label>1</label>
    </ligand>
</feature>
<feature type="binding site" evidence="3">
    <location>
        <position position="193"/>
    </location>
    <ligand>
        <name>Zn(2+)</name>
        <dbReference type="ChEBI" id="CHEBI:29105"/>
        <label>1</label>
    </ligand>
</feature>
<feature type="binding site" evidence="3">
    <location>
        <position position="196"/>
    </location>
    <ligand>
        <name>Zn(2+)</name>
        <dbReference type="ChEBI" id="CHEBI:29105"/>
        <label>1</label>
    </ligand>
</feature>
<feature type="binding site" evidence="3">
    <location>
        <position position="212"/>
    </location>
    <ligand>
        <name>Zn(2+)</name>
        <dbReference type="ChEBI" id="CHEBI:29105"/>
        <label>2</label>
    </ligand>
</feature>
<feature type="binding site" evidence="3">
    <location>
        <position position="215"/>
    </location>
    <ligand>
        <name>Zn(2+)</name>
        <dbReference type="ChEBI" id="CHEBI:29105"/>
        <label>2</label>
    </ligand>
</feature>
<feature type="binding site" evidence="3">
    <location>
        <position position="219"/>
    </location>
    <ligand>
        <name>Zn(2+)</name>
        <dbReference type="ChEBI" id="CHEBI:29105"/>
        <label>2</label>
    </ligand>
</feature>
<feature type="binding site" evidence="3">
    <location>
        <position position="231"/>
    </location>
    <ligand>
        <name>Zn(2+)</name>
        <dbReference type="ChEBI" id="CHEBI:29105"/>
        <label>2</label>
    </ligand>
</feature>
<feature type="sequence conflict" description="In Ref. 5; AK100057." evidence="6" ref="5">
    <original>V</original>
    <variation>A</variation>
    <location>
        <position position="697"/>
    </location>
</feature>
<accession>Q6I576</accession>
<accession>A0A0P0WMC4</accession>
<sequence>MDAPGGGGGGGGGGGGVDAGEPVWDWGNLLDFAVHDDDSLVLPWGDDSIGIEADPAEAALLPPAPSPQPAEAEAEAAGPASLPSSMQAEGSKRRVRKRDPRLVCPNYLAGRVPCACPEIDEMAAALEVEDVATELLAGARKKPKGAGRGSGAAVGGSGGGASRGTPAEMKCQVPGCEADIRELKGYHRRHRVCLRCAHAAAVMLDGVQKRYCQQCGKFHILLDFDEDKRSCRRKLERHNKRRRRKPDSKGILEKDIDDQLDFSADGSGDGELREENIDVTTSETLETVLSNKVLDRETPVGSDDVLSSPTCAQPSLQIDQSKSLVTFAASVEACLGTKQENTKLTNSPVHDTKSTYSSSCPTGRVSFKLYDWNPAEFPRRLRHQIFEWLSSMPVELEGYIRPGCTILTVFVAMPQHMWDKLSEDTGNLVKSLVNAPNSLLLGKGAFFIHVNNMIFQVLKDGATLTSTRLEVQSPRIHYVHPSWFEAGKPIDLILCGSSLDQPKFRSLVSFDGLYLKHDCRRILSHETFDCIGSGEHILDSQHEIFRINITTSKLDTHGPAFVEVENMFGLSNFVPILVGSKHLCSELEQIHDALCGSSDISSDPCELRGLRQTAMLGFLIDIGWLIRKPSIDEFQNLLSLANIQRWICMMKFLIQNDFINVLEIIVNSLDNIIGSELLSNLEKGRLENHVTEFLGYVSEARNIVDNRPKYDKQRQVDTRWAGDYAPNQPKLGISVPLAESTGTSGEHDLHSTNAASGEEENMPLVTKALPHRQCCHPETSARWLNAASIGAFPGGAMRMRLATTVVIGAVVCFAACVVLFHPHRVGVLAAPVKRYLSRNYSS</sequence>
<dbReference type="EMBL" id="AC137620">
    <property type="protein sequence ID" value="AAT58848.1"/>
    <property type="molecule type" value="Genomic_DNA"/>
</dbReference>
<dbReference type="EMBL" id="AC137928">
    <property type="protein sequence ID" value="AAV59443.1"/>
    <property type="molecule type" value="Genomic_DNA"/>
</dbReference>
<dbReference type="EMBL" id="AP008211">
    <property type="protein sequence ID" value="BAF17436.1"/>
    <property type="molecule type" value="Genomic_DNA"/>
</dbReference>
<dbReference type="EMBL" id="AP014961">
    <property type="protein sequence ID" value="BAS93974.1"/>
    <property type="molecule type" value="Genomic_DNA"/>
</dbReference>
<dbReference type="EMBL" id="AK100057">
    <property type="status" value="NOT_ANNOTATED_CDS"/>
    <property type="molecule type" value="mRNA"/>
</dbReference>
<dbReference type="RefSeq" id="XP_015640052.1">
    <property type="nucleotide sequence ID" value="XM_015784566.1"/>
</dbReference>
<dbReference type="SMR" id="Q6I576"/>
<dbReference type="FunCoup" id="Q6I576">
    <property type="interactions" value="2610"/>
</dbReference>
<dbReference type="STRING" id="39947.Q6I576"/>
<dbReference type="PaxDb" id="39947-Q6I576"/>
<dbReference type="EnsemblPlants" id="Os05t0408200-01">
    <property type="protein sequence ID" value="Os05t0408200-01"/>
    <property type="gene ID" value="Os05g0408200"/>
</dbReference>
<dbReference type="Gramene" id="Os05t0408200-01">
    <property type="protein sequence ID" value="Os05t0408200-01"/>
    <property type="gene ID" value="Os05g0408200"/>
</dbReference>
<dbReference type="KEGG" id="dosa:Os05g0408200"/>
<dbReference type="eggNOG" id="ENOG502QUTN">
    <property type="taxonomic scope" value="Eukaryota"/>
</dbReference>
<dbReference type="HOGENOM" id="CLU_019548_1_0_1"/>
<dbReference type="InParanoid" id="Q6I576"/>
<dbReference type="OMA" id="WQSEELS"/>
<dbReference type="OrthoDB" id="514967at2759"/>
<dbReference type="Proteomes" id="UP000000763">
    <property type="component" value="Chromosome 5"/>
</dbReference>
<dbReference type="Proteomes" id="UP000059680">
    <property type="component" value="Chromosome 5"/>
</dbReference>
<dbReference type="GO" id="GO:0005634">
    <property type="term" value="C:nucleus"/>
    <property type="evidence" value="ECO:0007669"/>
    <property type="project" value="UniProtKB-SubCell"/>
</dbReference>
<dbReference type="GO" id="GO:0003677">
    <property type="term" value="F:DNA binding"/>
    <property type="evidence" value="ECO:0007669"/>
    <property type="project" value="UniProtKB-KW"/>
</dbReference>
<dbReference type="GO" id="GO:0008270">
    <property type="term" value="F:zinc ion binding"/>
    <property type="evidence" value="ECO:0007669"/>
    <property type="project" value="UniProtKB-KW"/>
</dbReference>
<dbReference type="Gene3D" id="4.10.1100.10">
    <property type="entry name" value="Transcription factor, SBP-box domain"/>
    <property type="match status" value="1"/>
</dbReference>
<dbReference type="InterPro" id="IPR044817">
    <property type="entry name" value="SBP-like"/>
</dbReference>
<dbReference type="InterPro" id="IPR004333">
    <property type="entry name" value="SBP_dom"/>
</dbReference>
<dbReference type="InterPro" id="IPR036893">
    <property type="entry name" value="SBP_sf"/>
</dbReference>
<dbReference type="PANTHER" id="PTHR31251">
    <property type="entry name" value="SQUAMOSA PROMOTER-BINDING-LIKE PROTEIN 4"/>
    <property type="match status" value="1"/>
</dbReference>
<dbReference type="PANTHER" id="PTHR31251:SF108">
    <property type="entry name" value="SQUAMOSA PROMOTER-BINDING-LIKE PROTEIN 7"/>
    <property type="match status" value="1"/>
</dbReference>
<dbReference type="Pfam" id="PF03110">
    <property type="entry name" value="SBP"/>
    <property type="match status" value="1"/>
</dbReference>
<dbReference type="SUPFAM" id="SSF103612">
    <property type="entry name" value="SBT domain"/>
    <property type="match status" value="1"/>
</dbReference>
<dbReference type="PROSITE" id="PS51141">
    <property type="entry name" value="ZF_SBP"/>
    <property type="match status" value="1"/>
</dbReference>
<evidence type="ECO:0000250" key="1"/>
<evidence type="ECO:0000255" key="2"/>
<evidence type="ECO:0000255" key="3">
    <source>
        <dbReference type="PROSITE-ProRule" id="PRU00470"/>
    </source>
</evidence>
<evidence type="ECO:0000256" key="4">
    <source>
        <dbReference type="SAM" id="MobiDB-lite"/>
    </source>
</evidence>
<evidence type="ECO:0000269" key="5">
    <source>
    </source>
</evidence>
<evidence type="ECO:0000305" key="6"/>
<reference key="1">
    <citation type="journal article" date="2005" name="Mol. Genet. Genomics">
        <title>A fine physical map of the rice chromosome 5.</title>
        <authorList>
            <person name="Cheng C.-H."/>
            <person name="Chung M.C."/>
            <person name="Liu S.-M."/>
            <person name="Chen S.-K."/>
            <person name="Kao F.Y."/>
            <person name="Lin S.-J."/>
            <person name="Hsiao S.-H."/>
            <person name="Tseng I.C."/>
            <person name="Hsing Y.-I.C."/>
            <person name="Wu H.-P."/>
            <person name="Chen C.-S."/>
            <person name="Shaw J.-F."/>
            <person name="Wu J."/>
            <person name="Matsumoto T."/>
            <person name="Sasaki T."/>
            <person name="Chen H.-C."/>
            <person name="Chow T.-Y."/>
        </authorList>
    </citation>
    <scope>NUCLEOTIDE SEQUENCE [LARGE SCALE GENOMIC DNA]</scope>
    <source>
        <strain>cv. Nipponbare</strain>
    </source>
</reference>
<reference key="2">
    <citation type="journal article" date="2005" name="Nature">
        <title>The map-based sequence of the rice genome.</title>
        <authorList>
            <consortium name="International rice genome sequencing project (IRGSP)"/>
        </authorList>
    </citation>
    <scope>NUCLEOTIDE SEQUENCE [LARGE SCALE GENOMIC DNA]</scope>
    <source>
        <strain>cv. Nipponbare</strain>
    </source>
</reference>
<reference key="3">
    <citation type="journal article" date="2008" name="Nucleic Acids Res.">
        <title>The rice annotation project database (RAP-DB): 2008 update.</title>
        <authorList>
            <consortium name="The rice annotation project (RAP)"/>
        </authorList>
    </citation>
    <scope>GENOME REANNOTATION</scope>
    <source>
        <strain>cv. Nipponbare</strain>
    </source>
</reference>
<reference key="4">
    <citation type="journal article" date="2013" name="Rice">
        <title>Improvement of the Oryza sativa Nipponbare reference genome using next generation sequence and optical map data.</title>
        <authorList>
            <person name="Kawahara Y."/>
            <person name="de la Bastide M."/>
            <person name="Hamilton J.P."/>
            <person name="Kanamori H."/>
            <person name="McCombie W.R."/>
            <person name="Ouyang S."/>
            <person name="Schwartz D.C."/>
            <person name="Tanaka T."/>
            <person name="Wu J."/>
            <person name="Zhou S."/>
            <person name="Childs K.L."/>
            <person name="Davidson R.M."/>
            <person name="Lin H."/>
            <person name="Quesada-Ocampo L."/>
            <person name="Vaillancourt B."/>
            <person name="Sakai H."/>
            <person name="Lee S.S."/>
            <person name="Kim J."/>
            <person name="Numa H."/>
            <person name="Itoh T."/>
            <person name="Buell C.R."/>
            <person name="Matsumoto T."/>
        </authorList>
    </citation>
    <scope>GENOME REANNOTATION</scope>
    <source>
        <strain>cv. Nipponbare</strain>
    </source>
</reference>
<reference key="5">
    <citation type="journal article" date="2003" name="Science">
        <title>Collection, mapping, and annotation of over 28,000 cDNA clones from japonica rice.</title>
        <authorList>
            <consortium name="The rice full-length cDNA consortium"/>
        </authorList>
    </citation>
    <scope>NUCLEOTIDE SEQUENCE [LARGE SCALE MRNA]</scope>
    <source>
        <strain>cv. Nipponbare</strain>
    </source>
</reference>
<reference key="6">
    <citation type="journal article" date="2006" name="Plant Physiol.">
        <title>Genomic organization, differential expression, and interaction of SQUAMOSA promoter-binding-like transcription factors and microRNA156 in rice.</title>
        <authorList>
            <person name="Xie K."/>
            <person name="Wu C."/>
            <person name="Xiong L."/>
        </authorList>
    </citation>
    <scope>TISSUE SPECIFICITY</scope>
    <scope>GENE FAMILY</scope>
    <scope>NOMENCLATURE</scope>
</reference>
<reference key="7">
    <citation type="journal article" date="2008" name="Gene">
        <title>Comparative study of SBP-box gene family in Arabidopsis and rice.</title>
        <authorList>
            <person name="Yang Z."/>
            <person name="Wang X."/>
            <person name="Gu S."/>
            <person name="Hu Z."/>
            <person name="Xu H."/>
            <person name="Xu C."/>
        </authorList>
    </citation>
    <scope>GENE FAMILY</scope>
</reference>
<protein>
    <recommendedName>
        <fullName>Squamosa promoter-binding-like protein 9</fullName>
    </recommendedName>
</protein>
<keyword id="KW-0238">DNA-binding</keyword>
<keyword id="KW-0479">Metal-binding</keyword>
<keyword id="KW-0539">Nucleus</keyword>
<keyword id="KW-1185">Reference proteome</keyword>
<keyword id="KW-0804">Transcription</keyword>
<keyword id="KW-0805">Transcription regulation</keyword>
<keyword id="KW-0862">Zinc</keyword>
<keyword id="KW-0863">Zinc-finger</keyword>
<gene>
    <name type="primary">SPL9</name>
    <name type="ordered locus">Os05g0408200</name>
    <name type="ordered locus">LOC_Os05g33810</name>
    <name type="ORF">OSJNBb0014K18.5</name>
    <name type="ORF">P0040B10.14</name>
</gene>
<comment type="function">
    <text evidence="1">Trans-acting factor that binds specifically to the consensus nucleotide sequence 5'-TNCGTACAA-3'.</text>
</comment>
<comment type="subcellular location">
    <subcellularLocation>
        <location evidence="6">Nucleus</location>
    </subcellularLocation>
</comment>
<comment type="tissue specificity">
    <text evidence="5">Ubiquitous.</text>
</comment>
<comment type="domain">
    <text evidence="1">The SBP-type zinc finger is required for the binding to DNA.</text>
</comment>
<name>SPL9_ORYSJ</name>
<organism>
    <name type="scientific">Oryza sativa subsp. japonica</name>
    <name type="common">Rice</name>
    <dbReference type="NCBI Taxonomy" id="39947"/>
    <lineage>
        <taxon>Eukaryota</taxon>
        <taxon>Viridiplantae</taxon>
        <taxon>Streptophyta</taxon>
        <taxon>Embryophyta</taxon>
        <taxon>Tracheophyta</taxon>
        <taxon>Spermatophyta</taxon>
        <taxon>Magnoliopsida</taxon>
        <taxon>Liliopsida</taxon>
        <taxon>Poales</taxon>
        <taxon>Poaceae</taxon>
        <taxon>BOP clade</taxon>
        <taxon>Oryzoideae</taxon>
        <taxon>Oryzeae</taxon>
        <taxon>Oryzinae</taxon>
        <taxon>Oryza</taxon>
        <taxon>Oryza sativa</taxon>
    </lineage>
</organism>
<proteinExistence type="evidence at transcript level"/>